<proteinExistence type="inferred from homology"/>
<reference key="1">
    <citation type="journal article" date="2007" name="Nat. Biotechnol.">
        <title>Comparative analysis of the complete genome sequence of the plant growth-promoting bacterium Bacillus amyloliquefaciens FZB42.</title>
        <authorList>
            <person name="Chen X.H."/>
            <person name="Koumoutsi A."/>
            <person name="Scholz R."/>
            <person name="Eisenreich A."/>
            <person name="Schneider K."/>
            <person name="Heinemeyer I."/>
            <person name="Morgenstern B."/>
            <person name="Voss B."/>
            <person name="Hess W.R."/>
            <person name="Reva O."/>
            <person name="Junge H."/>
            <person name="Voigt B."/>
            <person name="Jungblut P.R."/>
            <person name="Vater J."/>
            <person name="Suessmuth R."/>
            <person name="Liesegang H."/>
            <person name="Strittmatter A."/>
            <person name="Gottschalk G."/>
            <person name="Borriss R."/>
        </authorList>
    </citation>
    <scope>NUCLEOTIDE SEQUENCE [LARGE SCALE GENOMIC DNA]</scope>
    <source>
        <strain>DSM 23117 / BGSC 10A6 / LMG 26770 / FZB42</strain>
    </source>
</reference>
<evidence type="ECO:0000255" key="1">
    <source>
        <dbReference type="HAMAP-Rule" id="MF_00500"/>
    </source>
</evidence>
<evidence type="ECO:0000256" key="2">
    <source>
        <dbReference type="SAM" id="MobiDB-lite"/>
    </source>
</evidence>
<evidence type="ECO:0000305" key="3"/>
<name>RS20_BACVZ</name>
<sequence length="88" mass="9527">MPNIKSAIKRTKTNNERRAHNATIKSAMRTAIKQVEASVANNEADKAKTALSEAAKRIDKAVKTGLVHKNAAARYKSRLAKQVNGLSA</sequence>
<dbReference type="EMBL" id="CP000560">
    <property type="protein sequence ID" value="ABS74745.1"/>
    <property type="molecule type" value="Genomic_DNA"/>
</dbReference>
<dbReference type="RefSeq" id="WP_003152876.1">
    <property type="nucleotide sequence ID" value="NC_009725.2"/>
</dbReference>
<dbReference type="SMR" id="A7Z6W9"/>
<dbReference type="GeneID" id="93081523"/>
<dbReference type="KEGG" id="bay:RBAM_023850"/>
<dbReference type="HOGENOM" id="CLU_160655_1_0_9"/>
<dbReference type="Proteomes" id="UP000001120">
    <property type="component" value="Chromosome"/>
</dbReference>
<dbReference type="GO" id="GO:0005829">
    <property type="term" value="C:cytosol"/>
    <property type="evidence" value="ECO:0007669"/>
    <property type="project" value="TreeGrafter"/>
</dbReference>
<dbReference type="GO" id="GO:0015935">
    <property type="term" value="C:small ribosomal subunit"/>
    <property type="evidence" value="ECO:0007669"/>
    <property type="project" value="TreeGrafter"/>
</dbReference>
<dbReference type="GO" id="GO:0070181">
    <property type="term" value="F:small ribosomal subunit rRNA binding"/>
    <property type="evidence" value="ECO:0007669"/>
    <property type="project" value="TreeGrafter"/>
</dbReference>
<dbReference type="GO" id="GO:0003735">
    <property type="term" value="F:structural constituent of ribosome"/>
    <property type="evidence" value="ECO:0007669"/>
    <property type="project" value="InterPro"/>
</dbReference>
<dbReference type="GO" id="GO:0006412">
    <property type="term" value="P:translation"/>
    <property type="evidence" value="ECO:0007669"/>
    <property type="project" value="UniProtKB-UniRule"/>
</dbReference>
<dbReference type="FunFam" id="1.20.58.110:FF:000001">
    <property type="entry name" value="30S ribosomal protein S20"/>
    <property type="match status" value="1"/>
</dbReference>
<dbReference type="Gene3D" id="1.20.58.110">
    <property type="entry name" value="Ribosomal protein S20"/>
    <property type="match status" value="1"/>
</dbReference>
<dbReference type="HAMAP" id="MF_00500">
    <property type="entry name" value="Ribosomal_bS20"/>
    <property type="match status" value="1"/>
</dbReference>
<dbReference type="InterPro" id="IPR002583">
    <property type="entry name" value="Ribosomal_bS20"/>
</dbReference>
<dbReference type="InterPro" id="IPR036510">
    <property type="entry name" value="Ribosomal_bS20_sf"/>
</dbReference>
<dbReference type="NCBIfam" id="TIGR00029">
    <property type="entry name" value="S20"/>
    <property type="match status" value="1"/>
</dbReference>
<dbReference type="PANTHER" id="PTHR33398">
    <property type="entry name" value="30S RIBOSOMAL PROTEIN S20"/>
    <property type="match status" value="1"/>
</dbReference>
<dbReference type="PANTHER" id="PTHR33398:SF1">
    <property type="entry name" value="SMALL RIBOSOMAL SUBUNIT PROTEIN BS20C"/>
    <property type="match status" value="1"/>
</dbReference>
<dbReference type="Pfam" id="PF01649">
    <property type="entry name" value="Ribosomal_S20p"/>
    <property type="match status" value="1"/>
</dbReference>
<dbReference type="SUPFAM" id="SSF46992">
    <property type="entry name" value="Ribosomal protein S20"/>
    <property type="match status" value="1"/>
</dbReference>
<comment type="function">
    <text evidence="1">Binds directly to 16S ribosomal RNA.</text>
</comment>
<comment type="similarity">
    <text evidence="1">Belongs to the bacterial ribosomal protein bS20 family.</text>
</comment>
<accession>A7Z6W9</accession>
<gene>
    <name evidence="1" type="primary">rpsT</name>
    <name type="ordered locus">RBAM_023850</name>
</gene>
<organism>
    <name type="scientific">Bacillus velezensis (strain DSM 23117 / BGSC 10A6 / LMG 26770 / FZB42)</name>
    <name type="common">Bacillus amyloliquefaciens subsp. plantarum</name>
    <dbReference type="NCBI Taxonomy" id="326423"/>
    <lineage>
        <taxon>Bacteria</taxon>
        <taxon>Bacillati</taxon>
        <taxon>Bacillota</taxon>
        <taxon>Bacilli</taxon>
        <taxon>Bacillales</taxon>
        <taxon>Bacillaceae</taxon>
        <taxon>Bacillus</taxon>
        <taxon>Bacillus amyloliquefaciens group</taxon>
    </lineage>
</organism>
<protein>
    <recommendedName>
        <fullName evidence="1">Small ribosomal subunit protein bS20</fullName>
    </recommendedName>
    <alternativeName>
        <fullName evidence="3">30S ribosomal protein S20</fullName>
    </alternativeName>
</protein>
<keyword id="KW-0687">Ribonucleoprotein</keyword>
<keyword id="KW-0689">Ribosomal protein</keyword>
<keyword id="KW-0694">RNA-binding</keyword>
<keyword id="KW-0699">rRNA-binding</keyword>
<feature type="chain" id="PRO_1000014548" description="Small ribosomal subunit protein bS20">
    <location>
        <begin position="1"/>
        <end position="88"/>
    </location>
</feature>
<feature type="region of interest" description="Disordered" evidence="2">
    <location>
        <begin position="1"/>
        <end position="20"/>
    </location>
</feature>